<protein>
    <recommendedName>
        <fullName evidence="1">Phosphoribosyl-dephospho-CoA transferase</fullName>
        <ecNumber evidence="1">2.7.7.66</ecNumber>
    </recommendedName>
    <alternativeName>
        <fullName evidence="1">Malonate decarboxylase holo-[acyl-carrier-protein] synthase</fullName>
        <shortName evidence="1">Holo-ACP synthase</shortName>
    </alternativeName>
</protein>
<feature type="chain" id="PRO_0000220298" description="Phosphoribosyl-dephospho-CoA transferase">
    <location>
        <begin position="1"/>
        <end position="213"/>
    </location>
</feature>
<feature type="active site" evidence="1">
    <location>
        <position position="135"/>
    </location>
</feature>
<feature type="active site" evidence="1">
    <location>
        <position position="137"/>
    </location>
</feature>
<accession>Q8P4U3</accession>
<reference key="1">
    <citation type="journal article" date="2002" name="Nature">
        <title>Comparison of the genomes of two Xanthomonas pathogens with differing host specificities.</title>
        <authorList>
            <person name="da Silva A.C.R."/>
            <person name="Ferro J.A."/>
            <person name="Reinach F.C."/>
            <person name="Farah C.S."/>
            <person name="Furlan L.R."/>
            <person name="Quaggio R.B."/>
            <person name="Monteiro-Vitorello C.B."/>
            <person name="Van Sluys M.A."/>
            <person name="Almeida N.F. Jr."/>
            <person name="Alves L.M.C."/>
            <person name="do Amaral A.M."/>
            <person name="Bertolini M.C."/>
            <person name="Camargo L.E.A."/>
            <person name="Camarotte G."/>
            <person name="Cannavan F."/>
            <person name="Cardozo J."/>
            <person name="Chambergo F."/>
            <person name="Ciapina L.P."/>
            <person name="Cicarelli R.M.B."/>
            <person name="Coutinho L.L."/>
            <person name="Cursino-Santos J.R."/>
            <person name="El-Dorry H."/>
            <person name="Faria J.B."/>
            <person name="Ferreira A.J.S."/>
            <person name="Ferreira R.C.C."/>
            <person name="Ferro M.I.T."/>
            <person name="Formighieri E.F."/>
            <person name="Franco M.C."/>
            <person name="Greggio C.C."/>
            <person name="Gruber A."/>
            <person name="Katsuyama A.M."/>
            <person name="Kishi L.T."/>
            <person name="Leite R.P."/>
            <person name="Lemos E.G.M."/>
            <person name="Lemos M.V.F."/>
            <person name="Locali E.C."/>
            <person name="Machado M.A."/>
            <person name="Madeira A.M.B.N."/>
            <person name="Martinez-Rossi N.M."/>
            <person name="Martins E.C."/>
            <person name="Meidanis J."/>
            <person name="Menck C.F.M."/>
            <person name="Miyaki C.Y."/>
            <person name="Moon D.H."/>
            <person name="Moreira L.M."/>
            <person name="Novo M.T.M."/>
            <person name="Okura V.K."/>
            <person name="Oliveira M.C."/>
            <person name="Oliveira V.R."/>
            <person name="Pereira H.A."/>
            <person name="Rossi A."/>
            <person name="Sena J.A.D."/>
            <person name="Silva C."/>
            <person name="de Souza R.F."/>
            <person name="Spinola L.A.F."/>
            <person name="Takita M.A."/>
            <person name="Tamura R.E."/>
            <person name="Teixeira E.C."/>
            <person name="Tezza R.I.D."/>
            <person name="Trindade dos Santos M."/>
            <person name="Truffi D."/>
            <person name="Tsai S.M."/>
            <person name="White F.F."/>
            <person name="Setubal J.C."/>
            <person name="Kitajima J.P."/>
        </authorList>
    </citation>
    <scope>NUCLEOTIDE SEQUENCE [LARGE SCALE GENOMIC DNA]</scope>
    <source>
        <strain>ATCC 33913 / DSM 3586 / NCPPB 528 / LMG 568 / P 25</strain>
    </source>
</reference>
<keyword id="KW-0548">Nucleotidyltransferase</keyword>
<keyword id="KW-1185">Reference proteome</keyword>
<keyword id="KW-0808">Transferase</keyword>
<comment type="function">
    <text evidence="1">Transfers 2'-(5-triphosphoribosyl)-3'-dephosphocoenzyme-A to the apo-[acyl-carrier-protein] of the malonate decarboxylase to yield holo-[acyl-carrier-protein].</text>
</comment>
<comment type="catalytic activity">
    <reaction evidence="1">
        <text>apo-[malonate decarboxylase ACP] + 2'-(5''-triphospho-alpha-D-ribosyl)-3'-dephospho-CoA = holo-[malonate decarboxylase ACP] + diphosphate</text>
        <dbReference type="Rhea" id="RHEA:42644"/>
        <dbReference type="Rhea" id="RHEA-COMP:10160"/>
        <dbReference type="Rhea" id="RHEA-COMP:10161"/>
        <dbReference type="ChEBI" id="CHEBI:29999"/>
        <dbReference type="ChEBI" id="CHEBI:33019"/>
        <dbReference type="ChEBI" id="CHEBI:61378"/>
        <dbReference type="ChEBI" id="CHEBI:82683"/>
        <dbReference type="EC" id="2.7.7.66"/>
    </reaction>
</comment>
<comment type="similarity">
    <text evidence="1">Belongs to the MdcG family.</text>
</comment>
<proteinExistence type="inferred from homology"/>
<dbReference type="EC" id="2.7.7.66" evidence="1"/>
<dbReference type="EMBL" id="AE008922">
    <property type="protein sequence ID" value="AAM42883.1"/>
    <property type="molecule type" value="Genomic_DNA"/>
</dbReference>
<dbReference type="RefSeq" id="NP_638959.1">
    <property type="nucleotide sequence ID" value="NC_003902.1"/>
</dbReference>
<dbReference type="RefSeq" id="WP_011038697.1">
    <property type="nucleotide sequence ID" value="NC_003902.1"/>
</dbReference>
<dbReference type="STRING" id="190485.XCC3613"/>
<dbReference type="EnsemblBacteria" id="AAM42883">
    <property type="protein sequence ID" value="AAM42883"/>
    <property type="gene ID" value="XCC3613"/>
</dbReference>
<dbReference type="KEGG" id="xcc:XCC3613"/>
<dbReference type="PATRIC" id="fig|190485.4.peg.3870"/>
<dbReference type="eggNOG" id="ENOG503268I">
    <property type="taxonomic scope" value="Bacteria"/>
</dbReference>
<dbReference type="HOGENOM" id="CLU_075747_0_1_6"/>
<dbReference type="OrthoDB" id="5985862at2"/>
<dbReference type="Proteomes" id="UP000001010">
    <property type="component" value="Chromosome"/>
</dbReference>
<dbReference type="GO" id="GO:0016779">
    <property type="term" value="F:nucleotidyltransferase activity"/>
    <property type="evidence" value="ECO:0007669"/>
    <property type="project" value="UniProtKB-UniRule"/>
</dbReference>
<dbReference type="HAMAP" id="MF_00650">
    <property type="entry name" value="Malonate_MdcG"/>
    <property type="match status" value="1"/>
</dbReference>
<dbReference type="InterPro" id="IPR017557">
    <property type="entry name" value="Holo-ACP_synthase"/>
</dbReference>
<dbReference type="InterPro" id="IPR049180">
    <property type="entry name" value="MdcG_C"/>
</dbReference>
<dbReference type="InterPro" id="IPR048903">
    <property type="entry name" value="MdcG_N"/>
</dbReference>
<dbReference type="NCBIfam" id="TIGR03135">
    <property type="entry name" value="malonate_mdcG"/>
    <property type="match status" value="1"/>
</dbReference>
<dbReference type="Pfam" id="PF10620">
    <property type="entry name" value="MdcG"/>
    <property type="match status" value="1"/>
</dbReference>
<dbReference type="Pfam" id="PF20866">
    <property type="entry name" value="MdcG_N"/>
    <property type="match status" value="1"/>
</dbReference>
<evidence type="ECO:0000255" key="1">
    <source>
        <dbReference type="HAMAP-Rule" id="MF_00650"/>
    </source>
</evidence>
<name>MDCG_XANCP</name>
<gene>
    <name evidence="1" type="primary">mdcG</name>
    <name type="ordered locus">XCC3613</name>
</gene>
<organism>
    <name type="scientific">Xanthomonas campestris pv. campestris (strain ATCC 33913 / DSM 3586 / NCPPB 528 / LMG 568 / P 25)</name>
    <dbReference type="NCBI Taxonomy" id="190485"/>
    <lineage>
        <taxon>Bacteria</taxon>
        <taxon>Pseudomonadati</taxon>
        <taxon>Pseudomonadota</taxon>
        <taxon>Gammaproteobacteria</taxon>
        <taxon>Lysobacterales</taxon>
        <taxon>Lysobacteraceae</taxon>
        <taxon>Xanthomonas</taxon>
    </lineage>
</organism>
<sequence>MAGRHALVWLRADAPSQALTPGAQPRLQAWFAAGFPAVVARRDGAEQPGQVRLGVPLPPAQGKQRIALCAQVSDIARSVPALALPEVISHAPPQWQAALHALQAQATAIGMQPRVFGSFAFQAVTGLPYVHAASDVDLLWTLDTPTQAHAVVTLLQQWEHVTARRADGELLLPDGNAVNWREYAGDAQQVLVKRNDGCRLLPRTALFPERCAA</sequence>